<comment type="sequence caution" evidence="2">
    <conflict type="frameshift">
        <sequence resource="EMBL" id="AL009126"/>
    </conflict>
</comment>
<accession>O31769</accession>
<proteinExistence type="predicted"/>
<keyword id="KW-1185">Reference proteome</keyword>
<protein>
    <recommendedName>
        <fullName>Uncharacterized protein YmfK</fullName>
    </recommendedName>
</protein>
<evidence type="ECO:0000255" key="1">
    <source>
        <dbReference type="PROSITE-ProRule" id="PRU01007"/>
    </source>
</evidence>
<evidence type="ECO:0000305" key="2"/>
<sequence length="269" mass="31330">MKGVYHLAKLEWYFEYEIQVNRPGLLGDISSLLGMLSINIVTINGVDLSRRGMLLRCRHIDQIKRLESILKTMETIKVTKLREPRLRDRLAVRHGRYIQRDADDKKTFRFERDELGLLVDFMAELFKKEGHKLIGIRGMPRVGKTESIVASSVCASKRWLFVSSTLLKQTIRSQLIADEYSTENVFIVDGIVSTRRGSERHLQLVREIMRLPATKVVEHPDIFVQNTEYTLDDFDYIIELRNDPDEVITYEHAEEPQMFDQSGFSSFDF</sequence>
<name>YMFK_BACSU</name>
<feature type="chain" id="PRO_0000360185" description="Uncharacterized protein YmfK">
    <location>
        <begin position="1"/>
        <end position="269"/>
    </location>
</feature>
<feature type="domain" description="ACT" evidence="1">
    <location>
        <begin position="14"/>
        <end position="89"/>
    </location>
</feature>
<reference key="1">
    <citation type="journal article" date="1997" name="Nature">
        <title>The complete genome sequence of the Gram-positive bacterium Bacillus subtilis.</title>
        <authorList>
            <person name="Kunst F."/>
            <person name="Ogasawara N."/>
            <person name="Moszer I."/>
            <person name="Albertini A.M."/>
            <person name="Alloni G."/>
            <person name="Azevedo V."/>
            <person name="Bertero M.G."/>
            <person name="Bessieres P."/>
            <person name="Bolotin A."/>
            <person name="Borchert S."/>
            <person name="Borriss R."/>
            <person name="Boursier L."/>
            <person name="Brans A."/>
            <person name="Braun M."/>
            <person name="Brignell S.C."/>
            <person name="Bron S."/>
            <person name="Brouillet S."/>
            <person name="Bruschi C.V."/>
            <person name="Caldwell B."/>
            <person name="Capuano V."/>
            <person name="Carter N.M."/>
            <person name="Choi S.-K."/>
            <person name="Codani J.-J."/>
            <person name="Connerton I.F."/>
            <person name="Cummings N.J."/>
            <person name="Daniel R.A."/>
            <person name="Denizot F."/>
            <person name="Devine K.M."/>
            <person name="Duesterhoeft A."/>
            <person name="Ehrlich S.D."/>
            <person name="Emmerson P.T."/>
            <person name="Entian K.-D."/>
            <person name="Errington J."/>
            <person name="Fabret C."/>
            <person name="Ferrari E."/>
            <person name="Foulger D."/>
            <person name="Fritz C."/>
            <person name="Fujita M."/>
            <person name="Fujita Y."/>
            <person name="Fuma S."/>
            <person name="Galizzi A."/>
            <person name="Galleron N."/>
            <person name="Ghim S.-Y."/>
            <person name="Glaser P."/>
            <person name="Goffeau A."/>
            <person name="Golightly E.J."/>
            <person name="Grandi G."/>
            <person name="Guiseppi G."/>
            <person name="Guy B.J."/>
            <person name="Haga K."/>
            <person name="Haiech J."/>
            <person name="Harwood C.R."/>
            <person name="Henaut A."/>
            <person name="Hilbert H."/>
            <person name="Holsappel S."/>
            <person name="Hosono S."/>
            <person name="Hullo M.-F."/>
            <person name="Itaya M."/>
            <person name="Jones L.-M."/>
            <person name="Joris B."/>
            <person name="Karamata D."/>
            <person name="Kasahara Y."/>
            <person name="Klaerr-Blanchard M."/>
            <person name="Klein C."/>
            <person name="Kobayashi Y."/>
            <person name="Koetter P."/>
            <person name="Koningstein G."/>
            <person name="Krogh S."/>
            <person name="Kumano M."/>
            <person name="Kurita K."/>
            <person name="Lapidus A."/>
            <person name="Lardinois S."/>
            <person name="Lauber J."/>
            <person name="Lazarevic V."/>
            <person name="Lee S.-M."/>
            <person name="Levine A."/>
            <person name="Liu H."/>
            <person name="Masuda S."/>
            <person name="Mauel C."/>
            <person name="Medigue C."/>
            <person name="Medina N."/>
            <person name="Mellado R.P."/>
            <person name="Mizuno M."/>
            <person name="Moestl D."/>
            <person name="Nakai S."/>
            <person name="Noback M."/>
            <person name="Noone D."/>
            <person name="O'Reilly M."/>
            <person name="Ogawa K."/>
            <person name="Ogiwara A."/>
            <person name="Oudega B."/>
            <person name="Park S.-H."/>
            <person name="Parro V."/>
            <person name="Pohl T.M."/>
            <person name="Portetelle D."/>
            <person name="Porwollik S."/>
            <person name="Prescott A.M."/>
            <person name="Presecan E."/>
            <person name="Pujic P."/>
            <person name="Purnelle B."/>
            <person name="Rapoport G."/>
            <person name="Rey M."/>
            <person name="Reynolds S."/>
            <person name="Rieger M."/>
            <person name="Rivolta C."/>
            <person name="Rocha E."/>
            <person name="Roche B."/>
            <person name="Rose M."/>
            <person name="Sadaie Y."/>
            <person name="Sato T."/>
            <person name="Scanlan E."/>
            <person name="Schleich S."/>
            <person name="Schroeter R."/>
            <person name="Scoffone F."/>
            <person name="Sekiguchi J."/>
            <person name="Sekowska A."/>
            <person name="Seror S.J."/>
            <person name="Serror P."/>
            <person name="Shin B.-S."/>
            <person name="Soldo B."/>
            <person name="Sorokin A."/>
            <person name="Tacconi E."/>
            <person name="Takagi T."/>
            <person name="Takahashi H."/>
            <person name="Takemaru K."/>
            <person name="Takeuchi M."/>
            <person name="Tamakoshi A."/>
            <person name="Tanaka T."/>
            <person name="Terpstra P."/>
            <person name="Tognoni A."/>
            <person name="Tosato V."/>
            <person name="Uchiyama S."/>
            <person name="Vandenbol M."/>
            <person name="Vannier F."/>
            <person name="Vassarotti A."/>
            <person name="Viari A."/>
            <person name="Wambutt R."/>
            <person name="Wedler E."/>
            <person name="Wedler H."/>
            <person name="Weitzenegger T."/>
            <person name="Winters P."/>
            <person name="Wipat A."/>
            <person name="Yamamoto H."/>
            <person name="Yamane K."/>
            <person name="Yasumoto K."/>
            <person name="Yata K."/>
            <person name="Yoshida K."/>
            <person name="Yoshikawa H.-F."/>
            <person name="Zumstein E."/>
            <person name="Yoshikawa H."/>
            <person name="Danchin A."/>
        </authorList>
    </citation>
    <scope>NUCLEOTIDE SEQUENCE [LARGE SCALE GENOMIC DNA]</scope>
    <source>
        <strain>168</strain>
    </source>
</reference>
<dbReference type="EMBL" id="AL009126">
    <property type="status" value="NOT_ANNOTATED_CDS"/>
    <property type="molecule type" value="Genomic_DNA"/>
</dbReference>
<dbReference type="PIR" id="B69886">
    <property type="entry name" value="B69886"/>
</dbReference>
<dbReference type="InParanoid" id="O31769"/>
<dbReference type="Proteomes" id="UP000001570">
    <property type="component" value="Chromosome"/>
</dbReference>
<dbReference type="InterPro" id="IPR045865">
    <property type="entry name" value="ACT-like_dom_sf"/>
</dbReference>
<dbReference type="InterPro" id="IPR002912">
    <property type="entry name" value="ACT_dom"/>
</dbReference>
<dbReference type="InterPro" id="IPR024514">
    <property type="entry name" value="DUF3388"/>
</dbReference>
<dbReference type="InterPro" id="IPR016784">
    <property type="entry name" value="UCP021288_ACT"/>
</dbReference>
<dbReference type="Pfam" id="PF11868">
    <property type="entry name" value="DUF3388"/>
    <property type="match status" value="1"/>
</dbReference>
<dbReference type="PIRSF" id="PIRSF021288">
    <property type="entry name" value="UCP021288_ACT"/>
    <property type="match status" value="1"/>
</dbReference>
<dbReference type="SUPFAM" id="SSF55021">
    <property type="entry name" value="ACT-like"/>
    <property type="match status" value="1"/>
</dbReference>
<dbReference type="PROSITE" id="PS51671">
    <property type="entry name" value="ACT"/>
    <property type="match status" value="1"/>
</dbReference>
<gene>
    <name type="primary">ymfK</name>
    <name type="ordered locus">BSU16890/BSU16900</name>
</gene>
<organism>
    <name type="scientific">Bacillus subtilis (strain 168)</name>
    <dbReference type="NCBI Taxonomy" id="224308"/>
    <lineage>
        <taxon>Bacteria</taxon>
        <taxon>Bacillati</taxon>
        <taxon>Bacillota</taxon>
        <taxon>Bacilli</taxon>
        <taxon>Bacillales</taxon>
        <taxon>Bacillaceae</taxon>
        <taxon>Bacillus</taxon>
    </lineage>
</organism>